<accession>Q1C553</accession>
<sequence>MDGWQRAFVLHGRPYSETSLMLDLFTEGEGRMRVLAKGARGRRSNLKGCLQPFTPLLVRWSGRGEVKTLRSAEPVSLALPLSGSMLYSGLYVNELLSRVLEHQTSYSALFFDYLHCLQALAGSDGSPEHALRQFELAMLANLGYGVDFLHCAGSGQPVSDTMTYRYREEKGFIASLVVDHYSFTGRQLLALANREFPDADTLRAAKRFTRIALKPYLGGKPLKSRELFRQFVIKPPADPSP</sequence>
<name>RECO_YERPA</name>
<feature type="chain" id="PRO_0000264857" description="DNA repair protein RecO">
    <location>
        <begin position="1"/>
        <end position="241"/>
    </location>
</feature>
<evidence type="ECO:0000255" key="1">
    <source>
        <dbReference type="HAMAP-Rule" id="MF_00201"/>
    </source>
</evidence>
<keyword id="KW-0227">DNA damage</keyword>
<keyword id="KW-0233">DNA recombination</keyword>
<keyword id="KW-0234">DNA repair</keyword>
<comment type="function">
    <text evidence="1">Involved in DNA repair and RecF pathway recombination.</text>
</comment>
<comment type="similarity">
    <text evidence="1">Belongs to the RecO family.</text>
</comment>
<protein>
    <recommendedName>
        <fullName evidence="1">DNA repair protein RecO</fullName>
    </recommendedName>
    <alternativeName>
        <fullName evidence="1">Recombination protein O</fullName>
    </alternativeName>
</protein>
<proteinExistence type="inferred from homology"/>
<dbReference type="EMBL" id="CP000308">
    <property type="protein sequence ID" value="ABG14419.1"/>
    <property type="molecule type" value="Genomic_DNA"/>
</dbReference>
<dbReference type="RefSeq" id="WP_002209680.1">
    <property type="nucleotide sequence ID" value="NZ_CP009906.1"/>
</dbReference>
<dbReference type="SMR" id="Q1C553"/>
<dbReference type="GeneID" id="57975971"/>
<dbReference type="KEGG" id="ypa:YPA_2454"/>
<dbReference type="Proteomes" id="UP000001971">
    <property type="component" value="Chromosome"/>
</dbReference>
<dbReference type="GO" id="GO:0043590">
    <property type="term" value="C:bacterial nucleoid"/>
    <property type="evidence" value="ECO:0007669"/>
    <property type="project" value="TreeGrafter"/>
</dbReference>
<dbReference type="GO" id="GO:0006310">
    <property type="term" value="P:DNA recombination"/>
    <property type="evidence" value="ECO:0007669"/>
    <property type="project" value="UniProtKB-UniRule"/>
</dbReference>
<dbReference type="GO" id="GO:0006302">
    <property type="term" value="P:double-strand break repair"/>
    <property type="evidence" value="ECO:0007669"/>
    <property type="project" value="TreeGrafter"/>
</dbReference>
<dbReference type="Gene3D" id="2.40.50.140">
    <property type="entry name" value="Nucleic acid-binding proteins"/>
    <property type="match status" value="1"/>
</dbReference>
<dbReference type="Gene3D" id="1.20.1440.120">
    <property type="entry name" value="Recombination protein O, C-terminal domain"/>
    <property type="match status" value="1"/>
</dbReference>
<dbReference type="HAMAP" id="MF_00201">
    <property type="entry name" value="RecO"/>
    <property type="match status" value="1"/>
</dbReference>
<dbReference type="InterPro" id="IPR037278">
    <property type="entry name" value="ARFGAP/RecO"/>
</dbReference>
<dbReference type="InterPro" id="IPR022572">
    <property type="entry name" value="DNA_rep/recomb_RecO_N"/>
</dbReference>
<dbReference type="InterPro" id="IPR012340">
    <property type="entry name" value="NA-bd_OB-fold"/>
</dbReference>
<dbReference type="InterPro" id="IPR003717">
    <property type="entry name" value="RecO"/>
</dbReference>
<dbReference type="InterPro" id="IPR042242">
    <property type="entry name" value="RecO_C"/>
</dbReference>
<dbReference type="NCBIfam" id="TIGR00613">
    <property type="entry name" value="reco"/>
    <property type="match status" value="1"/>
</dbReference>
<dbReference type="PANTHER" id="PTHR33991">
    <property type="entry name" value="DNA REPAIR PROTEIN RECO"/>
    <property type="match status" value="1"/>
</dbReference>
<dbReference type="PANTHER" id="PTHR33991:SF1">
    <property type="entry name" value="DNA REPAIR PROTEIN RECO"/>
    <property type="match status" value="1"/>
</dbReference>
<dbReference type="Pfam" id="PF02565">
    <property type="entry name" value="RecO_C"/>
    <property type="match status" value="1"/>
</dbReference>
<dbReference type="Pfam" id="PF11967">
    <property type="entry name" value="RecO_N"/>
    <property type="match status" value="1"/>
</dbReference>
<dbReference type="SUPFAM" id="SSF57863">
    <property type="entry name" value="ArfGap/RecO-like zinc finger"/>
    <property type="match status" value="1"/>
</dbReference>
<dbReference type="SUPFAM" id="SSF50249">
    <property type="entry name" value="Nucleic acid-binding proteins"/>
    <property type="match status" value="1"/>
</dbReference>
<gene>
    <name evidence="1" type="primary">recO</name>
    <name type="ordered locus">YPA_2454</name>
</gene>
<organism>
    <name type="scientific">Yersinia pestis bv. Antiqua (strain Antiqua)</name>
    <dbReference type="NCBI Taxonomy" id="360102"/>
    <lineage>
        <taxon>Bacteria</taxon>
        <taxon>Pseudomonadati</taxon>
        <taxon>Pseudomonadota</taxon>
        <taxon>Gammaproteobacteria</taxon>
        <taxon>Enterobacterales</taxon>
        <taxon>Yersiniaceae</taxon>
        <taxon>Yersinia</taxon>
    </lineage>
</organism>
<reference key="1">
    <citation type="journal article" date="2006" name="J. Bacteriol.">
        <title>Complete genome sequence of Yersinia pestis strains Antiqua and Nepal516: evidence of gene reduction in an emerging pathogen.</title>
        <authorList>
            <person name="Chain P.S.G."/>
            <person name="Hu P."/>
            <person name="Malfatti S.A."/>
            <person name="Radnedge L."/>
            <person name="Larimer F."/>
            <person name="Vergez L.M."/>
            <person name="Worsham P."/>
            <person name="Chu M.C."/>
            <person name="Andersen G.L."/>
        </authorList>
    </citation>
    <scope>NUCLEOTIDE SEQUENCE [LARGE SCALE GENOMIC DNA]</scope>
    <source>
        <strain>Antiqua</strain>
    </source>
</reference>